<organism>
    <name type="scientific">Macaca mulatta</name>
    <name type="common">Rhesus macaque</name>
    <dbReference type="NCBI Taxonomy" id="9544"/>
    <lineage>
        <taxon>Eukaryota</taxon>
        <taxon>Metazoa</taxon>
        <taxon>Chordata</taxon>
        <taxon>Craniata</taxon>
        <taxon>Vertebrata</taxon>
        <taxon>Euteleostomi</taxon>
        <taxon>Mammalia</taxon>
        <taxon>Eutheria</taxon>
        <taxon>Euarchontoglires</taxon>
        <taxon>Primates</taxon>
        <taxon>Haplorrhini</taxon>
        <taxon>Catarrhini</taxon>
        <taxon>Cercopithecidae</taxon>
        <taxon>Cercopithecinae</taxon>
        <taxon>Macaca</taxon>
    </lineage>
</organism>
<comment type="function">
    <text evidence="1">Binds the poly(A) tail of mRNA. May be involved in cytoplasmic regulatory processes of mRNA metabolism. Can probably bind to cytoplasmic RNA sequences other than poly(A) in vivo (By similarity).</text>
</comment>
<comment type="subcellular location">
    <subcellularLocation>
        <location evidence="1">Cytoplasm</location>
    </subcellularLocation>
</comment>
<sequence>MGSGEPNPAGKKKKYLKAALYVGDLDPDVTEDMLYKKFRPAGPLRFTRICRDPVTRSPLGYGYVNFRFPADAEWALNTMNFDLINGKPFRLMWSQPDDRLRKSGVGNIFIKNLDKSIDNRALFYLFSAFGNILSCKVVCDDNGSKGYAYVHFDSLAAANRAIWHMNGVRLNNRQVYVGRFKFPEERAAEVRTRDRATFTNVFVKNIGDDIDDEKLKELFCEYGPTESVKVIRDASGKSKGFGFVRYETHEAAQKAVLDLHGKSIDGKVLYVGRAQKKIERLAELRRRFERLRLKEKSRPPGVPIYIKNLDETINDEKLKEEFSSFGSISRAKVMMEVGQGKGFGVVCFSSFEEATKAVDEMNGRVVGSKPLHVTLGQARRRC</sequence>
<gene>
    <name type="primary">PABPC5</name>
    <name type="synonym">PABP5</name>
</gene>
<feature type="chain" id="PRO_0000081707" description="Polyadenylate-binding protein 5">
    <location>
        <begin position="1"/>
        <end position="382"/>
    </location>
</feature>
<feature type="domain" description="RRM 1" evidence="2">
    <location>
        <begin position="18"/>
        <end position="96"/>
    </location>
</feature>
<feature type="domain" description="RRM 2" evidence="2">
    <location>
        <begin position="106"/>
        <end position="182"/>
    </location>
</feature>
<feature type="domain" description="RRM 3" evidence="2">
    <location>
        <begin position="199"/>
        <end position="276"/>
    </location>
</feature>
<feature type="domain" description="RRM 4" evidence="2">
    <location>
        <begin position="302"/>
        <end position="378"/>
    </location>
</feature>
<reference key="1">
    <citation type="journal article" date="2001" name="Genomics">
        <title>A novel poly(A)-binding protein gene (PABPC5) maps to an X-specific subinterval in the Xq21.3/Yp11.2 homology block of the human sex chromosomes.</title>
        <authorList>
            <person name="Blanco P."/>
            <person name="Sargent C.A."/>
            <person name="Boucher C.A."/>
            <person name="Howell G."/>
            <person name="Ross M."/>
            <person name="Affara N.A."/>
        </authorList>
    </citation>
    <scope>NUCLEOTIDE SEQUENCE [GENOMIC DNA]</scope>
</reference>
<dbReference type="EMBL" id="AJ299082">
    <property type="protein sequence ID" value="CAC42819.1"/>
    <property type="molecule type" value="Genomic_DNA"/>
</dbReference>
<dbReference type="RefSeq" id="NP_001038193.1">
    <property type="nucleotide sequence ID" value="NM_001044728.1"/>
</dbReference>
<dbReference type="RefSeq" id="XP_014983253.1">
    <property type="nucleotide sequence ID" value="XM_015127767.2"/>
</dbReference>
<dbReference type="SMR" id="Q7JGR2"/>
<dbReference type="FunCoup" id="Q7JGR2">
    <property type="interactions" value="194"/>
</dbReference>
<dbReference type="PaxDb" id="9544-ENSMMUP00000015191"/>
<dbReference type="GeneID" id="696409"/>
<dbReference type="KEGG" id="mcc:696409"/>
<dbReference type="CTD" id="140886"/>
<dbReference type="eggNOG" id="KOG0123">
    <property type="taxonomic scope" value="Eukaryota"/>
</dbReference>
<dbReference type="HOGENOM" id="CLU_012062_22_6_1"/>
<dbReference type="InParanoid" id="Q7JGR2"/>
<dbReference type="OrthoDB" id="19742at2759"/>
<dbReference type="TreeFam" id="TF300458"/>
<dbReference type="Proteomes" id="UP000006718">
    <property type="component" value="Unassembled WGS sequence"/>
</dbReference>
<dbReference type="GO" id="GO:0010494">
    <property type="term" value="C:cytoplasmic stress granule"/>
    <property type="evidence" value="ECO:0000318"/>
    <property type="project" value="GO_Central"/>
</dbReference>
<dbReference type="GO" id="GO:0005829">
    <property type="term" value="C:cytosol"/>
    <property type="evidence" value="ECO:0000318"/>
    <property type="project" value="GO_Central"/>
</dbReference>
<dbReference type="GO" id="GO:0005634">
    <property type="term" value="C:nucleus"/>
    <property type="evidence" value="ECO:0000318"/>
    <property type="project" value="GO_Central"/>
</dbReference>
<dbReference type="GO" id="GO:1990904">
    <property type="term" value="C:ribonucleoprotein complex"/>
    <property type="evidence" value="ECO:0000318"/>
    <property type="project" value="GO_Central"/>
</dbReference>
<dbReference type="GO" id="GO:0003730">
    <property type="term" value="F:mRNA 3'-UTR binding"/>
    <property type="evidence" value="ECO:0000318"/>
    <property type="project" value="GO_Central"/>
</dbReference>
<dbReference type="GO" id="GO:0008143">
    <property type="term" value="F:poly(A) binding"/>
    <property type="evidence" value="ECO:0000318"/>
    <property type="project" value="GO_Central"/>
</dbReference>
<dbReference type="GO" id="GO:0008266">
    <property type="term" value="F:poly(U) RNA binding"/>
    <property type="evidence" value="ECO:0000318"/>
    <property type="project" value="GO_Central"/>
</dbReference>
<dbReference type="CDD" id="cd12378">
    <property type="entry name" value="RRM1_I_PABPs"/>
    <property type="match status" value="1"/>
</dbReference>
<dbReference type="CDD" id="cd12379">
    <property type="entry name" value="RRM2_I_PABPs"/>
    <property type="match status" value="1"/>
</dbReference>
<dbReference type="CDD" id="cd12380">
    <property type="entry name" value="RRM3_I_PABPs"/>
    <property type="match status" value="1"/>
</dbReference>
<dbReference type="FunFam" id="3.30.70.330:FF:000003">
    <property type="entry name" value="Polyadenylate-binding protein"/>
    <property type="match status" value="1"/>
</dbReference>
<dbReference type="FunFam" id="3.30.70.330:FF:000049">
    <property type="entry name" value="Polyadenylate-binding protein"/>
    <property type="match status" value="1"/>
</dbReference>
<dbReference type="FunFam" id="3.30.70.330:FF:000234">
    <property type="entry name" value="Polyadenylate-binding protein 5"/>
    <property type="match status" value="1"/>
</dbReference>
<dbReference type="FunFam" id="3.30.70.330:FF:000338">
    <property type="entry name" value="polyadenylate-binding protein 5"/>
    <property type="match status" value="1"/>
</dbReference>
<dbReference type="Gene3D" id="3.30.70.330">
    <property type="match status" value="4"/>
</dbReference>
<dbReference type="InterPro" id="IPR012677">
    <property type="entry name" value="Nucleotide-bd_a/b_plait_sf"/>
</dbReference>
<dbReference type="InterPro" id="IPR006515">
    <property type="entry name" value="PABP_1234"/>
</dbReference>
<dbReference type="InterPro" id="IPR034364">
    <property type="entry name" value="PABP_RRM1"/>
</dbReference>
<dbReference type="InterPro" id="IPR035979">
    <property type="entry name" value="RBD_domain_sf"/>
</dbReference>
<dbReference type="InterPro" id="IPR045305">
    <property type="entry name" value="RRM2_I_PABPs"/>
</dbReference>
<dbReference type="InterPro" id="IPR000504">
    <property type="entry name" value="RRM_dom"/>
</dbReference>
<dbReference type="InterPro" id="IPR003954">
    <property type="entry name" value="RRM_dom_euk"/>
</dbReference>
<dbReference type="NCBIfam" id="TIGR01628">
    <property type="entry name" value="PABP-1234"/>
    <property type="match status" value="1"/>
</dbReference>
<dbReference type="PANTHER" id="PTHR24012">
    <property type="entry name" value="RNA BINDING PROTEIN"/>
    <property type="match status" value="1"/>
</dbReference>
<dbReference type="Pfam" id="PF00076">
    <property type="entry name" value="RRM_1"/>
    <property type="match status" value="4"/>
</dbReference>
<dbReference type="SMART" id="SM00360">
    <property type="entry name" value="RRM"/>
    <property type="match status" value="4"/>
</dbReference>
<dbReference type="SMART" id="SM00361">
    <property type="entry name" value="RRM_1"/>
    <property type="match status" value="3"/>
</dbReference>
<dbReference type="SUPFAM" id="SSF54928">
    <property type="entry name" value="RNA-binding domain, RBD"/>
    <property type="match status" value="2"/>
</dbReference>
<dbReference type="PROSITE" id="PS50102">
    <property type="entry name" value="RRM"/>
    <property type="match status" value="4"/>
</dbReference>
<keyword id="KW-0963">Cytoplasm</keyword>
<keyword id="KW-1185">Reference proteome</keyword>
<keyword id="KW-0677">Repeat</keyword>
<keyword id="KW-0694">RNA-binding</keyword>
<accession>Q7JGR2</accession>
<evidence type="ECO:0000250" key="1"/>
<evidence type="ECO:0000255" key="2">
    <source>
        <dbReference type="PROSITE-ProRule" id="PRU00176"/>
    </source>
</evidence>
<protein>
    <recommendedName>
        <fullName>Polyadenylate-binding protein 5</fullName>
        <shortName>PABP-5</shortName>
        <shortName>Poly(A)-binding protein 5</shortName>
    </recommendedName>
</protein>
<name>PABP5_MACMU</name>
<proteinExistence type="inferred from homology"/>